<feature type="chain" id="PRO_0000158449" description="Ribose-5-phosphate isomerase A">
    <location>
        <begin position="1"/>
        <end position="231"/>
    </location>
</feature>
<feature type="active site" description="Proton acceptor" evidence="1">
    <location>
        <position position="102"/>
    </location>
</feature>
<feature type="binding site" evidence="1">
    <location>
        <begin position="23"/>
        <end position="26"/>
    </location>
    <ligand>
        <name>substrate</name>
    </ligand>
</feature>
<feature type="binding site" evidence="1">
    <location>
        <begin position="80"/>
        <end position="83"/>
    </location>
    <ligand>
        <name>substrate</name>
    </ligand>
</feature>
<feature type="binding site" evidence="1">
    <location>
        <begin position="93"/>
        <end position="96"/>
    </location>
    <ligand>
        <name>substrate</name>
    </ligand>
</feature>
<feature type="binding site" evidence="1">
    <location>
        <position position="120"/>
    </location>
    <ligand>
        <name>substrate</name>
    </ligand>
</feature>
<sequence length="231" mass="24881">MKQIVADSAIEEVEDGMILGLGSGSTAALMIKSLAEKIRSGKLKNIKGVPTSFQSEVLALELNIPLIDLASVPYIDLAIDGADEVDPDFQLIKGGGACHVREKLVASKANKLLIVIDESKLVQNLNQVFPLPVEVMPSAWKQVKDIISEMSGVSNLRMATKKAGPVVTDQGNLILDVLFDAGIRDPKDLEMRINNIPGVLENGLFVDLADKVLVGKIEDDVPVLFSPSRRS</sequence>
<accession>Q7V003</accession>
<organism>
    <name type="scientific">Prochlorococcus marinus subsp. pastoris (strain CCMP1986 / NIES-2087 / MED4)</name>
    <dbReference type="NCBI Taxonomy" id="59919"/>
    <lineage>
        <taxon>Bacteria</taxon>
        <taxon>Bacillati</taxon>
        <taxon>Cyanobacteriota</taxon>
        <taxon>Cyanophyceae</taxon>
        <taxon>Synechococcales</taxon>
        <taxon>Prochlorococcaceae</taxon>
        <taxon>Prochlorococcus</taxon>
    </lineage>
</organism>
<reference key="1">
    <citation type="journal article" date="2003" name="Nature">
        <title>Genome divergence in two Prochlorococcus ecotypes reflects oceanic niche differentiation.</title>
        <authorList>
            <person name="Rocap G."/>
            <person name="Larimer F.W."/>
            <person name="Lamerdin J.E."/>
            <person name="Malfatti S."/>
            <person name="Chain P."/>
            <person name="Ahlgren N.A."/>
            <person name="Arellano A."/>
            <person name="Coleman M."/>
            <person name="Hauser L."/>
            <person name="Hess W.R."/>
            <person name="Johnson Z.I."/>
            <person name="Land M.L."/>
            <person name="Lindell D."/>
            <person name="Post A.F."/>
            <person name="Regala W."/>
            <person name="Shah M."/>
            <person name="Shaw S.L."/>
            <person name="Steglich C."/>
            <person name="Sullivan M.B."/>
            <person name="Ting C.S."/>
            <person name="Tolonen A."/>
            <person name="Webb E.A."/>
            <person name="Zinser E.R."/>
            <person name="Chisholm S.W."/>
        </authorList>
    </citation>
    <scope>NUCLEOTIDE SEQUENCE [LARGE SCALE GENOMIC DNA]</scope>
    <source>
        <strain>CCMP1986 / NIES-2087 / MED4</strain>
    </source>
</reference>
<proteinExistence type="inferred from homology"/>
<name>RPIA_PROMP</name>
<evidence type="ECO:0000255" key="1">
    <source>
        <dbReference type="HAMAP-Rule" id="MF_00170"/>
    </source>
</evidence>
<protein>
    <recommendedName>
        <fullName evidence="1">Ribose-5-phosphate isomerase A</fullName>
        <ecNumber evidence="1">5.3.1.6</ecNumber>
    </recommendedName>
    <alternativeName>
        <fullName evidence="1">Phosphoriboisomerase A</fullName>
        <shortName evidence="1">PRI</shortName>
    </alternativeName>
</protein>
<comment type="function">
    <text evidence="1">Catalyzes the reversible conversion of ribose-5-phosphate to ribulose 5-phosphate.</text>
</comment>
<comment type="catalytic activity">
    <reaction evidence="1">
        <text>aldehydo-D-ribose 5-phosphate = D-ribulose 5-phosphate</text>
        <dbReference type="Rhea" id="RHEA:14657"/>
        <dbReference type="ChEBI" id="CHEBI:58121"/>
        <dbReference type="ChEBI" id="CHEBI:58273"/>
        <dbReference type="EC" id="5.3.1.6"/>
    </reaction>
</comment>
<comment type="pathway">
    <text evidence="1">Carbohydrate degradation; pentose phosphate pathway; D-ribose 5-phosphate from D-ribulose 5-phosphate (non-oxidative stage): step 1/1.</text>
</comment>
<comment type="subunit">
    <text evidence="1">Homodimer.</text>
</comment>
<comment type="similarity">
    <text evidence="1">Belongs to the ribose 5-phosphate isomerase family.</text>
</comment>
<gene>
    <name evidence="1" type="primary">rpiA</name>
    <name type="ordered locus">PMM1489</name>
</gene>
<keyword id="KW-0413">Isomerase</keyword>
<dbReference type="EC" id="5.3.1.6" evidence="1"/>
<dbReference type="EMBL" id="BX548174">
    <property type="protein sequence ID" value="CAE19948.1"/>
    <property type="molecule type" value="Genomic_DNA"/>
</dbReference>
<dbReference type="RefSeq" id="WP_011133117.1">
    <property type="nucleotide sequence ID" value="NC_005072.1"/>
</dbReference>
<dbReference type="SMR" id="Q7V003"/>
<dbReference type="STRING" id="59919.PMM1489"/>
<dbReference type="KEGG" id="pmm:PMM1489"/>
<dbReference type="eggNOG" id="COG0120">
    <property type="taxonomic scope" value="Bacteria"/>
</dbReference>
<dbReference type="HOGENOM" id="CLU_056590_1_1_3"/>
<dbReference type="OrthoDB" id="5870696at2"/>
<dbReference type="UniPathway" id="UPA00115">
    <property type="reaction ID" value="UER00412"/>
</dbReference>
<dbReference type="Proteomes" id="UP000001026">
    <property type="component" value="Chromosome"/>
</dbReference>
<dbReference type="GO" id="GO:0005829">
    <property type="term" value="C:cytosol"/>
    <property type="evidence" value="ECO:0007669"/>
    <property type="project" value="TreeGrafter"/>
</dbReference>
<dbReference type="GO" id="GO:0004751">
    <property type="term" value="F:ribose-5-phosphate isomerase activity"/>
    <property type="evidence" value="ECO:0007669"/>
    <property type="project" value="UniProtKB-UniRule"/>
</dbReference>
<dbReference type="GO" id="GO:0006014">
    <property type="term" value="P:D-ribose metabolic process"/>
    <property type="evidence" value="ECO:0007669"/>
    <property type="project" value="TreeGrafter"/>
</dbReference>
<dbReference type="GO" id="GO:0009052">
    <property type="term" value="P:pentose-phosphate shunt, non-oxidative branch"/>
    <property type="evidence" value="ECO:0007669"/>
    <property type="project" value="UniProtKB-UniRule"/>
</dbReference>
<dbReference type="CDD" id="cd01398">
    <property type="entry name" value="RPI_A"/>
    <property type="match status" value="1"/>
</dbReference>
<dbReference type="FunFam" id="3.30.70.260:FF:000018">
    <property type="entry name" value="Ribose-5-phosphate isomerase A"/>
    <property type="match status" value="1"/>
</dbReference>
<dbReference type="FunFam" id="3.40.50.1360:FF:000001">
    <property type="entry name" value="Ribose-5-phosphate isomerase A"/>
    <property type="match status" value="1"/>
</dbReference>
<dbReference type="Gene3D" id="3.30.70.260">
    <property type="match status" value="1"/>
</dbReference>
<dbReference type="Gene3D" id="3.40.50.1360">
    <property type="match status" value="1"/>
</dbReference>
<dbReference type="HAMAP" id="MF_00170">
    <property type="entry name" value="Rib_5P_isom_A"/>
    <property type="match status" value="1"/>
</dbReference>
<dbReference type="InterPro" id="IPR037171">
    <property type="entry name" value="NagB/RpiA_transferase-like"/>
</dbReference>
<dbReference type="InterPro" id="IPR020672">
    <property type="entry name" value="Ribose5P_isomerase_typA_subgr"/>
</dbReference>
<dbReference type="InterPro" id="IPR004788">
    <property type="entry name" value="Ribose5P_isomerase_type_A"/>
</dbReference>
<dbReference type="NCBIfam" id="NF001924">
    <property type="entry name" value="PRK00702.1"/>
    <property type="match status" value="1"/>
</dbReference>
<dbReference type="NCBIfam" id="TIGR00021">
    <property type="entry name" value="rpiA"/>
    <property type="match status" value="1"/>
</dbReference>
<dbReference type="PANTHER" id="PTHR11934">
    <property type="entry name" value="RIBOSE-5-PHOSPHATE ISOMERASE"/>
    <property type="match status" value="1"/>
</dbReference>
<dbReference type="PANTHER" id="PTHR11934:SF0">
    <property type="entry name" value="RIBOSE-5-PHOSPHATE ISOMERASE"/>
    <property type="match status" value="1"/>
</dbReference>
<dbReference type="Pfam" id="PF06026">
    <property type="entry name" value="Rib_5-P_isom_A"/>
    <property type="match status" value="1"/>
</dbReference>
<dbReference type="SUPFAM" id="SSF75445">
    <property type="entry name" value="D-ribose-5-phosphate isomerase (RpiA), lid domain"/>
    <property type="match status" value="1"/>
</dbReference>
<dbReference type="SUPFAM" id="SSF100950">
    <property type="entry name" value="NagB/RpiA/CoA transferase-like"/>
    <property type="match status" value="1"/>
</dbReference>